<feature type="chain" id="PRO_0000264834" description="DNA repair protein RecO">
    <location>
        <begin position="1"/>
        <end position="256"/>
    </location>
</feature>
<organism>
    <name type="scientific">Rhizobium johnstonii (strain DSM 114642 / LMG 32736 / 3841)</name>
    <name type="common">Rhizobium leguminosarum bv. viciae</name>
    <dbReference type="NCBI Taxonomy" id="216596"/>
    <lineage>
        <taxon>Bacteria</taxon>
        <taxon>Pseudomonadati</taxon>
        <taxon>Pseudomonadota</taxon>
        <taxon>Alphaproteobacteria</taxon>
        <taxon>Hyphomicrobiales</taxon>
        <taxon>Rhizobiaceae</taxon>
        <taxon>Rhizobium/Agrobacterium group</taxon>
        <taxon>Rhizobium</taxon>
        <taxon>Rhizobium johnstonii</taxon>
    </lineage>
</organism>
<evidence type="ECO:0000255" key="1">
    <source>
        <dbReference type="HAMAP-Rule" id="MF_00201"/>
    </source>
</evidence>
<accession>Q1MJ50</accession>
<keyword id="KW-0227">DNA damage</keyword>
<keyword id="KW-0233">DNA recombination</keyword>
<keyword id="KW-0234">DNA repair</keyword>
<sequence length="256" mass="27886">MQWQDHAIILGVKRHGETSVIAEVMTRDRGRHLGLVRSGRSRAMQPVLQAGNAVEVIWRARLDEHLGEFRVEPVTLRAARLMETATAVYGVQAMGALLRLLPERDPHPHLFDALEVILDHLHNPADAGELFVRFELAVLNDLGFGLDLAECAATGARSDLVYVSPKSGRAVSRAAGAPWADKMLLLPPFLSIEGNHAADFDSLSAAFRLTGFFLHRHVYEPRGIEAVAARDGFVQAALKALNPTLRTLSGPNGVSA</sequence>
<name>RECO_RHIJ3</name>
<comment type="function">
    <text evidence="1">Involved in DNA repair and RecF pathway recombination.</text>
</comment>
<comment type="similarity">
    <text evidence="1">Belongs to the RecO family.</text>
</comment>
<dbReference type="EMBL" id="AM236080">
    <property type="protein sequence ID" value="CAK07010.1"/>
    <property type="molecule type" value="Genomic_DNA"/>
</dbReference>
<dbReference type="RefSeq" id="WP_011651206.1">
    <property type="nucleotide sequence ID" value="NC_008380.1"/>
</dbReference>
<dbReference type="SMR" id="Q1MJ50"/>
<dbReference type="EnsemblBacteria" id="CAK07010">
    <property type="protein sequence ID" value="CAK07010"/>
    <property type="gene ID" value="RL1515"/>
</dbReference>
<dbReference type="KEGG" id="rle:RL1515"/>
<dbReference type="eggNOG" id="COG1381">
    <property type="taxonomic scope" value="Bacteria"/>
</dbReference>
<dbReference type="HOGENOM" id="CLU_086029_0_0_5"/>
<dbReference type="Proteomes" id="UP000006575">
    <property type="component" value="Chromosome"/>
</dbReference>
<dbReference type="GO" id="GO:0043590">
    <property type="term" value="C:bacterial nucleoid"/>
    <property type="evidence" value="ECO:0007669"/>
    <property type="project" value="TreeGrafter"/>
</dbReference>
<dbReference type="GO" id="GO:0006310">
    <property type="term" value="P:DNA recombination"/>
    <property type="evidence" value="ECO:0007669"/>
    <property type="project" value="UniProtKB-UniRule"/>
</dbReference>
<dbReference type="GO" id="GO:0006302">
    <property type="term" value="P:double-strand break repair"/>
    <property type="evidence" value="ECO:0007669"/>
    <property type="project" value="TreeGrafter"/>
</dbReference>
<dbReference type="Gene3D" id="2.40.50.140">
    <property type="entry name" value="Nucleic acid-binding proteins"/>
    <property type="match status" value="1"/>
</dbReference>
<dbReference type="Gene3D" id="1.20.1440.120">
    <property type="entry name" value="Recombination protein O, C-terminal domain"/>
    <property type="match status" value="1"/>
</dbReference>
<dbReference type="HAMAP" id="MF_00201">
    <property type="entry name" value="RecO"/>
    <property type="match status" value="1"/>
</dbReference>
<dbReference type="InterPro" id="IPR037278">
    <property type="entry name" value="ARFGAP/RecO"/>
</dbReference>
<dbReference type="InterPro" id="IPR022572">
    <property type="entry name" value="DNA_rep/recomb_RecO_N"/>
</dbReference>
<dbReference type="InterPro" id="IPR012340">
    <property type="entry name" value="NA-bd_OB-fold"/>
</dbReference>
<dbReference type="InterPro" id="IPR003717">
    <property type="entry name" value="RecO"/>
</dbReference>
<dbReference type="InterPro" id="IPR042242">
    <property type="entry name" value="RecO_C"/>
</dbReference>
<dbReference type="NCBIfam" id="TIGR00613">
    <property type="entry name" value="reco"/>
    <property type="match status" value="1"/>
</dbReference>
<dbReference type="PANTHER" id="PTHR33991">
    <property type="entry name" value="DNA REPAIR PROTEIN RECO"/>
    <property type="match status" value="1"/>
</dbReference>
<dbReference type="PANTHER" id="PTHR33991:SF1">
    <property type="entry name" value="DNA REPAIR PROTEIN RECO"/>
    <property type="match status" value="1"/>
</dbReference>
<dbReference type="Pfam" id="PF02565">
    <property type="entry name" value="RecO_C"/>
    <property type="match status" value="1"/>
</dbReference>
<dbReference type="Pfam" id="PF11967">
    <property type="entry name" value="RecO_N"/>
    <property type="match status" value="1"/>
</dbReference>
<dbReference type="SUPFAM" id="SSF57863">
    <property type="entry name" value="ArfGap/RecO-like zinc finger"/>
    <property type="match status" value="1"/>
</dbReference>
<dbReference type="SUPFAM" id="SSF50249">
    <property type="entry name" value="Nucleic acid-binding proteins"/>
    <property type="match status" value="1"/>
</dbReference>
<proteinExistence type="inferred from homology"/>
<protein>
    <recommendedName>
        <fullName evidence="1">DNA repair protein RecO</fullName>
    </recommendedName>
    <alternativeName>
        <fullName evidence="1">Recombination protein O</fullName>
    </alternativeName>
</protein>
<reference key="1">
    <citation type="journal article" date="2006" name="Genome Biol.">
        <title>The genome of Rhizobium leguminosarum has recognizable core and accessory components.</title>
        <authorList>
            <person name="Young J.P.W."/>
            <person name="Crossman L.C."/>
            <person name="Johnston A.W.B."/>
            <person name="Thomson N.R."/>
            <person name="Ghazoui Z.F."/>
            <person name="Hull K.H."/>
            <person name="Wexler M."/>
            <person name="Curson A.R.J."/>
            <person name="Todd J.D."/>
            <person name="Poole P.S."/>
            <person name="Mauchline T.H."/>
            <person name="East A.K."/>
            <person name="Quail M.A."/>
            <person name="Churcher C."/>
            <person name="Arrowsmith C."/>
            <person name="Cherevach I."/>
            <person name="Chillingworth T."/>
            <person name="Clarke K."/>
            <person name="Cronin A."/>
            <person name="Davis P."/>
            <person name="Fraser A."/>
            <person name="Hance Z."/>
            <person name="Hauser H."/>
            <person name="Jagels K."/>
            <person name="Moule S."/>
            <person name="Mungall K."/>
            <person name="Norbertczak H."/>
            <person name="Rabbinowitsch E."/>
            <person name="Sanders M."/>
            <person name="Simmonds M."/>
            <person name="Whitehead S."/>
            <person name="Parkhill J."/>
        </authorList>
    </citation>
    <scope>NUCLEOTIDE SEQUENCE [LARGE SCALE GENOMIC DNA]</scope>
    <source>
        <strain>DSM 114642 / LMG 32736 / 3841</strain>
    </source>
</reference>
<gene>
    <name evidence="1" type="primary">recO</name>
    <name type="ordered locus">RL1515</name>
</gene>